<feature type="chain" id="PRO_0000457651" description="Protein OPG064">
    <location>
        <begin position="1"/>
        <end position="737"/>
    </location>
</feature>
<feature type="modified residue" description="N-acetylmethionine; by host" evidence="1">
    <location>
        <position position="1"/>
    </location>
</feature>
<feature type="disulfide bond" evidence="1">
    <location>
        <begin position="496"/>
        <end position="535"/>
    </location>
</feature>
<dbReference type="EMBL" id="MT903340">
    <property type="protein sequence ID" value="QNP12920.1"/>
    <property type="molecule type" value="Genomic_DNA"/>
</dbReference>
<dbReference type="RefSeq" id="YP_010377047.1">
    <property type="nucleotide sequence ID" value="NC_063383.1"/>
</dbReference>
<dbReference type="SMR" id="A0A7H0DN37"/>
<dbReference type="GeneID" id="72551460"/>
<dbReference type="Proteomes" id="UP000516359">
    <property type="component" value="Genome"/>
</dbReference>
<dbReference type="InterPro" id="IPR007585">
    <property type="entry name" value="Poxvirus_E2"/>
</dbReference>
<dbReference type="InterPro" id="IPR021155">
    <property type="entry name" value="Poxvirus_E2/O1"/>
</dbReference>
<dbReference type="Pfam" id="PF04497">
    <property type="entry name" value="Pox_E2-like"/>
    <property type="match status" value="1"/>
</dbReference>
<dbReference type="PIRSF" id="PIRSF015692">
    <property type="entry name" value="VAC_E2L"/>
    <property type="match status" value="1"/>
</dbReference>
<keyword id="KW-0007">Acetylation</keyword>
<keyword id="KW-1015">Disulfide bond</keyword>
<keyword id="KW-0244">Early protein</keyword>
<keyword id="KW-1185">Reference proteome</keyword>
<gene>
    <name type="primary">OPG064</name>
    <name type="ORF">MPXVgp051</name>
</gene>
<organism>
    <name type="scientific">Monkeypox virus</name>
    <dbReference type="NCBI Taxonomy" id="10244"/>
    <lineage>
        <taxon>Viruses</taxon>
        <taxon>Varidnaviria</taxon>
        <taxon>Bamfordvirae</taxon>
        <taxon>Nucleocytoviricota</taxon>
        <taxon>Pokkesviricetes</taxon>
        <taxon>Chitovirales</taxon>
        <taxon>Poxviridae</taxon>
        <taxon>Chordopoxvirinae</taxon>
        <taxon>Orthopoxvirus</taxon>
    </lineage>
</organism>
<comment type="function">
    <text evidence="1">Plays a role in intracellular enveloped virus (IEV) transport to the cell surface on microtubules. Together with protein OPG056, forms a complex that interacts with host KLC2 (kinesin light chain isoform 2) to engage the kinesin-1 complex and thereby promote IEV trafficking.</text>
</comment>
<comment type="subunit">
    <text evidence="1">Interacts with host KLC2; this interaction promotes IEV trafficking by engaging the host kinesin-1 complex. Interacts with protein OPG056.</text>
</comment>
<comment type="induction">
    <text evidence="1">Expressed in the early phase of the viral replicative cycle.</text>
</comment>
<comment type="PTM">
    <text evidence="1">N-acetylated on initiator methionine by host.</text>
</comment>
<comment type="similarity">
    <text evidence="2">Belongs to the orthopoxvirus OPG064 family.</text>
</comment>
<protein>
    <recommendedName>
        <fullName>Protein OPG064</fullName>
    </recommendedName>
</protein>
<organismHost>
    <name type="scientific">Cynomys gunnisoni</name>
    <name type="common">Gunnison's prairie dog</name>
    <name type="synonym">Spermophilus gunnisoni</name>
    <dbReference type="NCBI Taxonomy" id="45479"/>
</organismHost>
<organismHost>
    <name type="scientific">Cynomys leucurus</name>
    <name type="common">White-tailed prairie dog</name>
    <dbReference type="NCBI Taxonomy" id="99825"/>
</organismHost>
<organismHost>
    <name type="scientific">Cynomys ludovicianus</name>
    <name type="common">Black-tailed prairie dog</name>
    <dbReference type="NCBI Taxonomy" id="45480"/>
</organismHost>
<organismHost>
    <name type="scientific">Cynomys mexicanus</name>
    <name type="common">Mexican prairie dog</name>
    <dbReference type="NCBI Taxonomy" id="99826"/>
</organismHost>
<organismHost>
    <name type="scientific">Cynomys parvidens</name>
    <name type="common">Utah prairie dog</name>
    <dbReference type="NCBI Taxonomy" id="99827"/>
</organismHost>
<organismHost>
    <name type="scientific">Gliridae</name>
    <name type="common">dormice</name>
    <dbReference type="NCBI Taxonomy" id="30650"/>
</organismHost>
<organismHost>
    <name type="scientific">Heliosciurus ruwenzorii</name>
    <name type="common">Ruwenzori sun squirrel</name>
    <dbReference type="NCBI Taxonomy" id="226685"/>
</organismHost>
<organismHost>
    <name type="scientific">Homo sapiens</name>
    <name type="common">Human</name>
    <dbReference type="NCBI Taxonomy" id="9606"/>
</organismHost>
<organismHost>
    <name type="scientific">Mus musculus</name>
    <name type="common">Mouse</name>
    <dbReference type="NCBI Taxonomy" id="10090"/>
</organismHost>
<sequence length="737" mass="86005">MISVTDIRRAFLDNECHTITKAFGYLHEDKAIALIKIGFHPTYIPKVLYNNVVEFVPEKLYLFKPRTVSPLDLISTITKLKNVDKFAAHINYHKNSILITGDKSLIVKCMPYMIISDDDIRFIREQFVGTNSIEYILSFINKESVYRMSYQFSENEIVTIINRDHFMYEPIYEHQVLDSDFLKTMLDRYGIVPINSGIIDDLCPEAIIEILMAVVRPRDAIRFLDIVNKNQLTENSVKNYIINDIRRGKIDYYIPYVEDFLEDRTEDLGIYANIFFEDAIDITKLDITKTELEHISKYMNYYTTYIDHIVNIILQNNYIDILASIIDYVQDVLTEELCIRIVCESTNPVPVTSLPIHSTLVMVMCIQMKYVDIVEFLDEIDIDTLIEKGADPITEYTFTTRWYNKHNDLITLYIKKYGFCPMMMKRLMFEYPLTKEASDHLLKTMDENRGAIMFFPRTIYTLPYLLCCNYKLIQKPIPFKEENRNIEYKKTNRVLCFDSLENAAFKSLIKIDSIPGLKTYNMKDITYEKSNDIICVRFIPQDSIHNEERRIKLQLFDIARLASYGLYYIPSRYLSLWTPVVNMIEGREYTNPQKIECLVILDLFSEEFIEYQNLGNAVSNKYELEYTISNYQAAINCLMSTLLIYLVLGSIRSISRTEDFVLSILNIFYKGLKINELLSEPVSGVCIELDKIKDRASSGDSSFIFLKKNELSKTLSLCEKVCVETILDNNQSFKSSK</sequence>
<reference key="1">
    <citation type="journal article" date="2022" name="J. Infect. Dis.">
        <title>Exportation of Monkeypox virus from the African continent.</title>
        <authorList>
            <person name="Mauldin M.R."/>
            <person name="McCollum A.M."/>
            <person name="Nakazawa Y.J."/>
            <person name="Mandra A."/>
            <person name="Whitehouse E.R."/>
            <person name="Davidson W."/>
            <person name="Zhao H."/>
            <person name="Gao J."/>
            <person name="Li Y."/>
            <person name="Doty J."/>
            <person name="Yinka-Ogunleye A."/>
            <person name="Akinpelu A."/>
            <person name="Aruna O."/>
            <person name="Naidoo D."/>
            <person name="Lewandowski K."/>
            <person name="Afrough B."/>
            <person name="Graham V."/>
            <person name="Aarons E."/>
            <person name="Hewson R."/>
            <person name="Vipond R."/>
            <person name="Dunning J."/>
            <person name="Chand M."/>
            <person name="Brown C."/>
            <person name="Cohen-Gihon I."/>
            <person name="Erez N."/>
            <person name="Shifman O."/>
            <person name="Israeli O."/>
            <person name="Sharon M."/>
            <person name="Schwartz E."/>
            <person name="Beth-Din A."/>
            <person name="Zvi A."/>
            <person name="Mak T.M."/>
            <person name="Ng Y.K."/>
            <person name="Cui L."/>
            <person name="Lin R.T.P."/>
            <person name="Olson V.A."/>
            <person name="Brooks T."/>
            <person name="Paran N."/>
            <person name="Ihekweazu C."/>
            <person name="Reynolds M.G."/>
        </authorList>
    </citation>
    <scope>NUCLEOTIDE SEQUENCE [LARGE SCALE GENOMIC DNA]</scope>
    <source>
        <strain>MPXV-M5312_HM12_Rivers</strain>
    </source>
</reference>
<accession>A0A7H0DN37</accession>
<proteinExistence type="inferred from homology"/>
<name>PG064_MONPV</name>
<evidence type="ECO:0000250" key="1">
    <source>
        <dbReference type="UniProtKB" id="P21604"/>
    </source>
</evidence>
<evidence type="ECO:0000305" key="2"/>